<organismHost>
    <name type="scientific">Homo sapiens</name>
    <name type="common">Human</name>
    <dbReference type="NCBI Taxonomy" id="9606"/>
</organismHost>
<evidence type="ECO:0000250" key="1"/>
<evidence type="ECO:0000250" key="2">
    <source>
        <dbReference type="UniProtKB" id="P03347"/>
    </source>
</evidence>
<evidence type="ECO:0000250" key="3">
    <source>
        <dbReference type="UniProtKB" id="P03366"/>
    </source>
</evidence>
<evidence type="ECO:0000250" key="4">
    <source>
        <dbReference type="UniProtKB" id="P04585"/>
    </source>
</evidence>
<evidence type="ECO:0000250" key="5">
    <source>
        <dbReference type="UniProtKB" id="P12493"/>
    </source>
</evidence>
<evidence type="ECO:0000250" key="6">
    <source>
        <dbReference type="UniProtKB" id="P12497"/>
    </source>
</evidence>
<evidence type="ECO:0000255" key="7"/>
<evidence type="ECO:0000255" key="8">
    <source>
        <dbReference type="PROSITE-ProRule" id="PRU00047"/>
    </source>
</evidence>
<evidence type="ECO:0000255" key="9">
    <source>
        <dbReference type="PROSITE-ProRule" id="PRU00275"/>
    </source>
</evidence>
<evidence type="ECO:0000255" key="10">
    <source>
        <dbReference type="PROSITE-ProRule" id="PRU00405"/>
    </source>
</evidence>
<evidence type="ECO:0000255" key="11">
    <source>
        <dbReference type="PROSITE-ProRule" id="PRU00408"/>
    </source>
</evidence>
<evidence type="ECO:0000255" key="12">
    <source>
        <dbReference type="PROSITE-ProRule" id="PRU00450"/>
    </source>
</evidence>
<evidence type="ECO:0000255" key="13">
    <source>
        <dbReference type="PROSITE-ProRule" id="PRU00457"/>
    </source>
</evidence>
<evidence type="ECO:0000255" key="14">
    <source>
        <dbReference type="PROSITE-ProRule" id="PRU00506"/>
    </source>
</evidence>
<evidence type="ECO:0000255" key="15">
    <source>
        <dbReference type="PROSITE-ProRule" id="PRU10094"/>
    </source>
</evidence>
<evidence type="ECO:0000256" key="16">
    <source>
        <dbReference type="SAM" id="MobiDB-lite"/>
    </source>
</evidence>
<evidence type="ECO:0000305" key="17"/>
<reference key="1">
    <citation type="journal article" date="1998" name="J. Virol.">
        <title>A comprehensive panel of near-full-length clones and reference sequences for non-subtype B isolates of human immunodeficiency virus type 1.</title>
        <authorList>
            <person name="Gao F."/>
            <person name="Robertson D.L."/>
            <person name="Carruthers C.D."/>
            <person name="Morrison S.G."/>
            <person name="Jian B."/>
            <person name="Chen Y."/>
            <person name="Barre-Sinoussi F."/>
            <person name="Girard M."/>
            <person name="Srinivasan A."/>
            <person name="Abimiku A.G."/>
            <person name="Shaw G.M."/>
            <person name="Sharp P.M."/>
            <person name="Hahn B.H."/>
        </authorList>
    </citation>
    <scope>NUCLEOTIDE SEQUENCE [GENOMIC DNA]</scope>
</reference>
<name>POL_HV190</name>
<dbReference type="EC" id="3.4.23.16"/>
<dbReference type="EC" id="2.7.7.49"/>
<dbReference type="EC" id="2.7.7.7"/>
<dbReference type="EC" id="3.1.26.13"/>
<dbReference type="EC" id="3.1.13.2"/>
<dbReference type="EC" id="2.7.7.-" evidence="4"/>
<dbReference type="EC" id="3.1.-.-" evidence="4"/>
<dbReference type="EMBL" id="AF005496">
    <property type="protein sequence ID" value="AAD03184.1"/>
    <property type="molecule type" value="Genomic_DNA"/>
</dbReference>
<dbReference type="BMRB" id="O93215"/>
<dbReference type="SMR" id="O93215"/>
<dbReference type="MEROPS" id="A02.001"/>
<dbReference type="PRO" id="PR:O93215"/>
<dbReference type="Proteomes" id="UP000007685">
    <property type="component" value="Segment"/>
</dbReference>
<dbReference type="GO" id="GO:0043657">
    <property type="term" value="C:host cell"/>
    <property type="evidence" value="ECO:0007669"/>
    <property type="project" value="GOC"/>
</dbReference>
<dbReference type="GO" id="GO:0042025">
    <property type="term" value="C:host cell nucleus"/>
    <property type="evidence" value="ECO:0007669"/>
    <property type="project" value="UniProtKB-SubCell"/>
</dbReference>
<dbReference type="GO" id="GO:0020002">
    <property type="term" value="C:host cell plasma membrane"/>
    <property type="evidence" value="ECO:0007669"/>
    <property type="project" value="UniProtKB-SubCell"/>
</dbReference>
<dbReference type="GO" id="GO:0072494">
    <property type="term" value="C:host multivesicular body"/>
    <property type="evidence" value="ECO:0007669"/>
    <property type="project" value="UniProtKB-SubCell"/>
</dbReference>
<dbReference type="GO" id="GO:0016020">
    <property type="term" value="C:membrane"/>
    <property type="evidence" value="ECO:0007669"/>
    <property type="project" value="UniProtKB-KW"/>
</dbReference>
<dbReference type="GO" id="GO:0019013">
    <property type="term" value="C:viral nucleocapsid"/>
    <property type="evidence" value="ECO:0007669"/>
    <property type="project" value="UniProtKB-KW"/>
</dbReference>
<dbReference type="GO" id="GO:0055036">
    <property type="term" value="C:virion membrane"/>
    <property type="evidence" value="ECO:0007669"/>
    <property type="project" value="UniProtKB-SubCell"/>
</dbReference>
<dbReference type="GO" id="GO:0004190">
    <property type="term" value="F:aspartic-type endopeptidase activity"/>
    <property type="evidence" value="ECO:0007669"/>
    <property type="project" value="UniProtKB-KW"/>
</dbReference>
<dbReference type="GO" id="GO:0003677">
    <property type="term" value="F:DNA binding"/>
    <property type="evidence" value="ECO:0007669"/>
    <property type="project" value="UniProtKB-KW"/>
</dbReference>
<dbReference type="GO" id="GO:0003887">
    <property type="term" value="F:DNA-directed DNA polymerase activity"/>
    <property type="evidence" value="ECO:0007669"/>
    <property type="project" value="UniProtKB-KW"/>
</dbReference>
<dbReference type="GO" id="GO:0004533">
    <property type="term" value="F:exoribonuclease H activity"/>
    <property type="evidence" value="ECO:0007669"/>
    <property type="project" value="UniProtKB-EC"/>
</dbReference>
<dbReference type="GO" id="GO:0008289">
    <property type="term" value="F:lipid binding"/>
    <property type="evidence" value="ECO:0007669"/>
    <property type="project" value="UniProtKB-KW"/>
</dbReference>
<dbReference type="GO" id="GO:0035613">
    <property type="term" value="F:RNA stem-loop binding"/>
    <property type="evidence" value="ECO:0007669"/>
    <property type="project" value="TreeGrafter"/>
</dbReference>
<dbReference type="GO" id="GO:0003964">
    <property type="term" value="F:RNA-directed DNA polymerase activity"/>
    <property type="evidence" value="ECO:0007669"/>
    <property type="project" value="UniProtKB-KW"/>
</dbReference>
<dbReference type="GO" id="GO:0004523">
    <property type="term" value="F:RNA-DNA hybrid ribonuclease activity"/>
    <property type="evidence" value="ECO:0007669"/>
    <property type="project" value="InterPro"/>
</dbReference>
<dbReference type="GO" id="GO:0005198">
    <property type="term" value="F:structural molecule activity"/>
    <property type="evidence" value="ECO:0007669"/>
    <property type="project" value="InterPro"/>
</dbReference>
<dbReference type="GO" id="GO:0008270">
    <property type="term" value="F:zinc ion binding"/>
    <property type="evidence" value="ECO:0007669"/>
    <property type="project" value="UniProtKB-KW"/>
</dbReference>
<dbReference type="GO" id="GO:0015074">
    <property type="term" value="P:DNA integration"/>
    <property type="evidence" value="ECO:0007669"/>
    <property type="project" value="UniProtKB-KW"/>
</dbReference>
<dbReference type="GO" id="GO:0006310">
    <property type="term" value="P:DNA recombination"/>
    <property type="evidence" value="ECO:0007669"/>
    <property type="project" value="UniProtKB-KW"/>
</dbReference>
<dbReference type="GO" id="GO:0075713">
    <property type="term" value="P:establishment of integrated proviral latency"/>
    <property type="evidence" value="ECO:0007669"/>
    <property type="project" value="UniProtKB-KW"/>
</dbReference>
<dbReference type="GO" id="GO:0006508">
    <property type="term" value="P:proteolysis"/>
    <property type="evidence" value="ECO:0007669"/>
    <property type="project" value="UniProtKB-KW"/>
</dbReference>
<dbReference type="GO" id="GO:0046718">
    <property type="term" value="P:symbiont entry into host cell"/>
    <property type="evidence" value="ECO:0007669"/>
    <property type="project" value="UniProtKB-KW"/>
</dbReference>
<dbReference type="GO" id="GO:0052151">
    <property type="term" value="P:symbiont-mediated activation of host apoptosis"/>
    <property type="evidence" value="ECO:0007669"/>
    <property type="project" value="UniProtKB-KW"/>
</dbReference>
<dbReference type="GO" id="GO:0039657">
    <property type="term" value="P:symbiont-mediated suppression of host gene expression"/>
    <property type="evidence" value="ECO:0007669"/>
    <property type="project" value="UniProtKB-KW"/>
</dbReference>
<dbReference type="GO" id="GO:0044826">
    <property type="term" value="P:viral genome integration into host DNA"/>
    <property type="evidence" value="ECO:0007669"/>
    <property type="project" value="UniProtKB-KW"/>
</dbReference>
<dbReference type="GO" id="GO:0075732">
    <property type="term" value="P:viral penetration into host nucleus"/>
    <property type="evidence" value="ECO:0007669"/>
    <property type="project" value="UniProtKB-KW"/>
</dbReference>
<dbReference type="GO" id="GO:0075523">
    <property type="term" value="P:viral translational frameshifting"/>
    <property type="evidence" value="ECO:0007669"/>
    <property type="project" value="UniProtKB-KW"/>
</dbReference>
<dbReference type="CDD" id="cd05482">
    <property type="entry name" value="HIV_retropepsin_like"/>
    <property type="match status" value="1"/>
</dbReference>
<dbReference type="CDD" id="cd01645">
    <property type="entry name" value="RT_Rtv"/>
    <property type="match status" value="1"/>
</dbReference>
<dbReference type="FunFam" id="1.10.1200.30:FF:000001">
    <property type="entry name" value="Gag polyprotein"/>
    <property type="match status" value="1"/>
</dbReference>
<dbReference type="FunFam" id="1.10.375.10:FF:000001">
    <property type="entry name" value="Gag polyprotein"/>
    <property type="match status" value="1"/>
</dbReference>
<dbReference type="FunFam" id="4.10.60.10:FF:000001">
    <property type="entry name" value="Gag polyprotein"/>
    <property type="match status" value="1"/>
</dbReference>
<dbReference type="FunFam" id="2.40.70.10:FF:000001">
    <property type="entry name" value="Gag-Pol polyprotein"/>
    <property type="match status" value="1"/>
</dbReference>
<dbReference type="FunFam" id="3.30.420.10:FF:000025">
    <property type="entry name" value="Gag-Pol polyprotein"/>
    <property type="match status" value="1"/>
</dbReference>
<dbReference type="FunFam" id="3.30.70.270:FF:000006">
    <property type="entry name" value="Gag-Pol polyprotein"/>
    <property type="match status" value="1"/>
</dbReference>
<dbReference type="FunFam" id="3.30.420.10:FF:000017">
    <property type="entry name" value="POL polyprotein"/>
    <property type="match status" value="1"/>
</dbReference>
<dbReference type="Gene3D" id="1.10.10.200">
    <property type="match status" value="1"/>
</dbReference>
<dbReference type="Gene3D" id="1.10.1200.30">
    <property type="match status" value="1"/>
</dbReference>
<dbReference type="Gene3D" id="3.30.70.270">
    <property type="match status" value="3"/>
</dbReference>
<dbReference type="Gene3D" id="2.40.70.10">
    <property type="entry name" value="Acid Proteases"/>
    <property type="match status" value="1"/>
</dbReference>
<dbReference type="Gene3D" id="3.10.10.10">
    <property type="entry name" value="HIV Type 1 Reverse Transcriptase, subunit A, domain 1"/>
    <property type="match status" value="1"/>
</dbReference>
<dbReference type="Gene3D" id="1.10.375.10">
    <property type="entry name" value="Human Immunodeficiency Virus Type 1 Capsid Protein"/>
    <property type="match status" value="1"/>
</dbReference>
<dbReference type="Gene3D" id="1.10.150.90">
    <property type="entry name" value="Immunodeficiency lentiviruses, gag gene matrix protein p17"/>
    <property type="match status" value="1"/>
</dbReference>
<dbReference type="Gene3D" id="2.30.30.10">
    <property type="entry name" value="Integrase, C-terminal domain superfamily, retroviral"/>
    <property type="match status" value="1"/>
</dbReference>
<dbReference type="Gene3D" id="3.30.420.10">
    <property type="entry name" value="Ribonuclease H-like superfamily/Ribonuclease H"/>
    <property type="match status" value="2"/>
</dbReference>
<dbReference type="Gene3D" id="1.20.5.760">
    <property type="entry name" value="Single helix bin"/>
    <property type="match status" value="1"/>
</dbReference>
<dbReference type="Gene3D" id="4.10.60.10">
    <property type="entry name" value="Zinc finger, CCHC-type"/>
    <property type="match status" value="1"/>
</dbReference>
<dbReference type="InterPro" id="IPR001969">
    <property type="entry name" value="Aspartic_peptidase_AS"/>
</dbReference>
<dbReference type="InterPro" id="IPR043502">
    <property type="entry name" value="DNA/RNA_pol_sf"/>
</dbReference>
<dbReference type="InterPro" id="IPR045345">
    <property type="entry name" value="Gag_p24_C"/>
</dbReference>
<dbReference type="InterPro" id="IPR017856">
    <property type="entry name" value="Integrase-like_N"/>
</dbReference>
<dbReference type="InterPro" id="IPR036862">
    <property type="entry name" value="Integrase_C_dom_sf_retrovir"/>
</dbReference>
<dbReference type="InterPro" id="IPR001037">
    <property type="entry name" value="Integrase_C_retrovir"/>
</dbReference>
<dbReference type="InterPro" id="IPR001584">
    <property type="entry name" value="Integrase_cat-core"/>
</dbReference>
<dbReference type="InterPro" id="IPR003308">
    <property type="entry name" value="Integrase_Zn-bd_dom_N"/>
</dbReference>
<dbReference type="InterPro" id="IPR000071">
    <property type="entry name" value="Lentvrl_matrix_N"/>
</dbReference>
<dbReference type="InterPro" id="IPR012344">
    <property type="entry name" value="Matrix_HIV/RSV_N"/>
</dbReference>
<dbReference type="InterPro" id="IPR001995">
    <property type="entry name" value="Peptidase_A2_cat"/>
</dbReference>
<dbReference type="InterPro" id="IPR021109">
    <property type="entry name" value="Peptidase_aspartic_dom_sf"/>
</dbReference>
<dbReference type="InterPro" id="IPR034170">
    <property type="entry name" value="Retropepsin-like_cat_dom"/>
</dbReference>
<dbReference type="InterPro" id="IPR018061">
    <property type="entry name" value="Retropepsins"/>
</dbReference>
<dbReference type="InterPro" id="IPR008916">
    <property type="entry name" value="Retrov_capsid_C"/>
</dbReference>
<dbReference type="InterPro" id="IPR008919">
    <property type="entry name" value="Retrov_capsid_N"/>
</dbReference>
<dbReference type="InterPro" id="IPR010999">
    <property type="entry name" value="Retrovr_matrix"/>
</dbReference>
<dbReference type="InterPro" id="IPR043128">
    <property type="entry name" value="Rev_trsase/Diguanyl_cyclase"/>
</dbReference>
<dbReference type="InterPro" id="IPR012337">
    <property type="entry name" value="RNaseH-like_sf"/>
</dbReference>
<dbReference type="InterPro" id="IPR002156">
    <property type="entry name" value="RNaseH_domain"/>
</dbReference>
<dbReference type="InterPro" id="IPR036397">
    <property type="entry name" value="RNaseH_sf"/>
</dbReference>
<dbReference type="InterPro" id="IPR000477">
    <property type="entry name" value="RT_dom"/>
</dbReference>
<dbReference type="InterPro" id="IPR010659">
    <property type="entry name" value="RVT_connect"/>
</dbReference>
<dbReference type="InterPro" id="IPR010661">
    <property type="entry name" value="RVT_thumb"/>
</dbReference>
<dbReference type="InterPro" id="IPR001878">
    <property type="entry name" value="Znf_CCHC"/>
</dbReference>
<dbReference type="InterPro" id="IPR036875">
    <property type="entry name" value="Znf_CCHC_sf"/>
</dbReference>
<dbReference type="PANTHER" id="PTHR41694">
    <property type="entry name" value="ENDOGENOUS RETROVIRUS GROUP K MEMBER POL PROTEIN"/>
    <property type="match status" value="1"/>
</dbReference>
<dbReference type="PANTHER" id="PTHR41694:SF3">
    <property type="entry name" value="RNA-DIRECTED DNA POLYMERASE-RELATED"/>
    <property type="match status" value="1"/>
</dbReference>
<dbReference type="Pfam" id="PF00540">
    <property type="entry name" value="Gag_p17"/>
    <property type="match status" value="1"/>
</dbReference>
<dbReference type="Pfam" id="PF19317">
    <property type="entry name" value="Gag_p24_C"/>
    <property type="match status" value="1"/>
</dbReference>
<dbReference type="Pfam" id="PF00552">
    <property type="entry name" value="IN_DBD_C"/>
    <property type="match status" value="1"/>
</dbReference>
<dbReference type="Pfam" id="PF02022">
    <property type="entry name" value="Integrase_Zn"/>
    <property type="match status" value="1"/>
</dbReference>
<dbReference type="Pfam" id="PF00075">
    <property type="entry name" value="RNase_H"/>
    <property type="match status" value="1"/>
</dbReference>
<dbReference type="Pfam" id="PF00665">
    <property type="entry name" value="rve"/>
    <property type="match status" value="1"/>
</dbReference>
<dbReference type="Pfam" id="PF00077">
    <property type="entry name" value="RVP"/>
    <property type="match status" value="1"/>
</dbReference>
<dbReference type="Pfam" id="PF00078">
    <property type="entry name" value="RVT_1"/>
    <property type="match status" value="1"/>
</dbReference>
<dbReference type="Pfam" id="PF06815">
    <property type="entry name" value="RVT_connect"/>
    <property type="match status" value="1"/>
</dbReference>
<dbReference type="Pfam" id="PF06817">
    <property type="entry name" value="RVT_thumb"/>
    <property type="match status" value="1"/>
</dbReference>
<dbReference type="Pfam" id="PF00098">
    <property type="entry name" value="zf-CCHC"/>
    <property type="match status" value="2"/>
</dbReference>
<dbReference type="PRINTS" id="PR00234">
    <property type="entry name" value="HIV1MATRIX"/>
</dbReference>
<dbReference type="SMART" id="SM00343">
    <property type="entry name" value="ZnF_C2HC"/>
    <property type="match status" value="2"/>
</dbReference>
<dbReference type="SUPFAM" id="SSF50630">
    <property type="entry name" value="Acid proteases"/>
    <property type="match status" value="1"/>
</dbReference>
<dbReference type="SUPFAM" id="SSF50122">
    <property type="entry name" value="DNA-binding domain of retroviral integrase"/>
    <property type="match status" value="1"/>
</dbReference>
<dbReference type="SUPFAM" id="SSF56672">
    <property type="entry name" value="DNA/RNA polymerases"/>
    <property type="match status" value="1"/>
</dbReference>
<dbReference type="SUPFAM" id="SSF46919">
    <property type="entry name" value="N-terminal Zn binding domain of HIV integrase"/>
    <property type="match status" value="1"/>
</dbReference>
<dbReference type="SUPFAM" id="SSF47836">
    <property type="entry name" value="Retroviral matrix proteins"/>
    <property type="match status" value="1"/>
</dbReference>
<dbReference type="SUPFAM" id="SSF47353">
    <property type="entry name" value="Retrovirus capsid dimerization domain-like"/>
    <property type="match status" value="1"/>
</dbReference>
<dbReference type="SUPFAM" id="SSF47943">
    <property type="entry name" value="Retrovirus capsid protein, N-terminal core domain"/>
    <property type="match status" value="1"/>
</dbReference>
<dbReference type="SUPFAM" id="SSF57756">
    <property type="entry name" value="Retrovirus zinc finger-like domains"/>
    <property type="match status" value="1"/>
</dbReference>
<dbReference type="SUPFAM" id="SSF53098">
    <property type="entry name" value="Ribonuclease H-like"/>
    <property type="match status" value="2"/>
</dbReference>
<dbReference type="PROSITE" id="PS50175">
    <property type="entry name" value="ASP_PROT_RETROV"/>
    <property type="match status" value="1"/>
</dbReference>
<dbReference type="PROSITE" id="PS00141">
    <property type="entry name" value="ASP_PROTEASE"/>
    <property type="match status" value="1"/>
</dbReference>
<dbReference type="PROSITE" id="PS50994">
    <property type="entry name" value="INTEGRASE"/>
    <property type="match status" value="1"/>
</dbReference>
<dbReference type="PROSITE" id="PS51027">
    <property type="entry name" value="INTEGRASE_DBD"/>
    <property type="match status" value="1"/>
</dbReference>
<dbReference type="PROSITE" id="PS50879">
    <property type="entry name" value="RNASE_H_1"/>
    <property type="match status" value="1"/>
</dbReference>
<dbReference type="PROSITE" id="PS50878">
    <property type="entry name" value="RT_POL"/>
    <property type="match status" value="1"/>
</dbReference>
<dbReference type="PROSITE" id="PS50158">
    <property type="entry name" value="ZF_CCHC"/>
    <property type="match status" value="2"/>
</dbReference>
<dbReference type="PROSITE" id="PS50876">
    <property type="entry name" value="ZF_INTEGRASE"/>
    <property type="match status" value="1"/>
</dbReference>
<organism>
    <name type="scientific">Human immunodeficiency virus type 1 group M subtype H (isolate 90CF056)</name>
    <name type="common">HIV-1</name>
    <dbReference type="NCBI Taxonomy" id="388826"/>
    <lineage>
        <taxon>Viruses</taxon>
        <taxon>Riboviria</taxon>
        <taxon>Pararnavirae</taxon>
        <taxon>Artverviricota</taxon>
        <taxon>Revtraviricetes</taxon>
        <taxon>Ortervirales</taxon>
        <taxon>Retroviridae</taxon>
        <taxon>Orthoretrovirinae</taxon>
        <taxon>Lentivirus</taxon>
        <taxon>Human immunodeficiency virus type 1</taxon>
    </lineage>
</organism>
<protein>
    <recommendedName>
        <fullName>Gag-Pol polyprotein</fullName>
    </recommendedName>
    <alternativeName>
        <fullName>Pr160Gag-Pol</fullName>
    </alternativeName>
    <component>
        <recommendedName>
            <fullName>Matrix protein p17</fullName>
            <shortName>MA</shortName>
        </recommendedName>
    </component>
    <component>
        <recommendedName>
            <fullName>Capsid protein p24</fullName>
            <shortName>CA</shortName>
        </recommendedName>
    </component>
    <component>
        <recommendedName>
            <fullName evidence="6">Spacer peptide 1</fullName>
            <shortName>SP1</shortName>
        </recommendedName>
        <alternativeName>
            <fullName>p2</fullName>
        </alternativeName>
    </component>
    <component>
        <recommendedName>
            <fullName>Nucleocapsid protein p7</fullName>
            <shortName>NC</shortName>
        </recommendedName>
    </component>
    <component>
        <recommendedName>
            <fullName>Transframe peptide</fullName>
            <shortName>TF</shortName>
        </recommendedName>
    </component>
    <component>
        <recommendedName>
            <fullName>p6-pol</fullName>
            <shortName>p6*</shortName>
        </recommendedName>
    </component>
    <component>
        <recommendedName>
            <fullName>Protease</fullName>
            <ecNumber>3.4.23.16</ecNumber>
        </recommendedName>
        <alternativeName>
            <fullName>PR</fullName>
        </alternativeName>
        <alternativeName>
            <fullName>Retropepsin</fullName>
        </alternativeName>
    </component>
    <component>
        <recommendedName>
            <fullName>Reverse transcriptase/ribonuclease H</fullName>
            <ecNumber>2.7.7.49</ecNumber>
            <ecNumber>2.7.7.7</ecNumber>
            <ecNumber>3.1.26.13</ecNumber>
        </recommendedName>
        <alternativeName>
            <fullName>Exoribonuclease H</fullName>
            <ecNumber>3.1.13.2</ecNumber>
        </alternativeName>
        <alternativeName>
            <fullName>p66 RT</fullName>
        </alternativeName>
    </component>
    <component>
        <recommendedName>
            <fullName>p51 RT</fullName>
        </recommendedName>
    </component>
    <component>
        <recommendedName>
            <fullName>p15</fullName>
        </recommendedName>
    </component>
    <component>
        <recommendedName>
            <fullName>Integrase</fullName>
            <shortName>IN</shortName>
            <ecNumber evidence="4">2.7.7.-</ecNumber>
            <ecNumber evidence="4">3.1.-.-</ecNumber>
        </recommendedName>
    </component>
</protein>
<feature type="initiator methionine" description="Removed; by host" evidence="1">
    <location>
        <position position="1"/>
    </location>
</feature>
<feature type="chain" id="PRO_0000261255" description="Gag-Pol polyprotein">
    <location>
        <begin position="2"/>
        <end position="1435"/>
    </location>
</feature>
<feature type="chain" id="PRO_0000246446" description="Matrix protein p17" evidence="1">
    <location>
        <begin position="2"/>
        <end position="132"/>
    </location>
</feature>
<feature type="chain" id="PRO_0000246447" description="Capsid protein p24" evidence="1">
    <location>
        <begin position="133"/>
        <end position="363"/>
    </location>
</feature>
<feature type="peptide" id="PRO_0000246448" description="Spacer peptide 1" evidence="1">
    <location>
        <begin position="364"/>
        <end position="378"/>
    </location>
</feature>
<feature type="chain" id="PRO_0000246449" description="Nucleocapsid protein p7" evidence="1">
    <location>
        <begin position="379"/>
        <end position="433"/>
    </location>
</feature>
<feature type="peptide" id="PRO_0000246704" description="Transframe peptide" evidence="7">
    <location>
        <begin position="434"/>
        <end position="441"/>
    </location>
</feature>
<feature type="chain" id="PRO_0000246450" description="p6-pol" evidence="7">
    <location>
        <begin position="442"/>
        <end position="488"/>
    </location>
</feature>
<feature type="chain" id="PRO_0000246451" description="Protease" evidence="1">
    <location>
        <begin position="489"/>
        <end position="587"/>
    </location>
</feature>
<feature type="chain" id="PRO_0000246452" description="Reverse transcriptase/ribonuclease H" evidence="1">
    <location>
        <begin position="588"/>
        <end position="1147"/>
    </location>
</feature>
<feature type="chain" id="PRO_0000246453" description="p51 RT" evidence="1">
    <location>
        <begin position="588"/>
        <end position="1027"/>
    </location>
</feature>
<feature type="chain" id="PRO_0000246454" description="p15" evidence="1">
    <location>
        <begin position="1028"/>
        <end position="1147"/>
    </location>
</feature>
<feature type="chain" id="PRO_0000246455" description="Integrase" evidence="1">
    <location>
        <begin position="1148"/>
        <end position="1435"/>
    </location>
</feature>
<feature type="domain" description="Peptidase A2" evidence="9">
    <location>
        <begin position="508"/>
        <end position="577"/>
    </location>
</feature>
<feature type="domain" description="Reverse transcriptase" evidence="10">
    <location>
        <begin position="631"/>
        <end position="821"/>
    </location>
</feature>
<feature type="domain" description="RNase H type-1" evidence="11">
    <location>
        <begin position="1021"/>
        <end position="1144"/>
    </location>
</feature>
<feature type="domain" description="Integrase catalytic" evidence="13">
    <location>
        <begin position="1201"/>
        <end position="1351"/>
    </location>
</feature>
<feature type="zinc finger region" description="CCHC-type 1" evidence="8">
    <location>
        <begin position="391"/>
        <end position="408"/>
    </location>
</feature>
<feature type="zinc finger region" description="CCHC-type 2" evidence="8">
    <location>
        <begin position="412"/>
        <end position="429"/>
    </location>
</feature>
<feature type="zinc finger region" description="Integrase-type" evidence="12">
    <location>
        <begin position="1150"/>
        <end position="1191"/>
    </location>
</feature>
<feature type="DNA-binding region" description="Integrase-type" evidence="14">
    <location>
        <begin position="1370"/>
        <end position="1417"/>
    </location>
</feature>
<feature type="region of interest" description="Interaction with Gp41" evidence="6">
    <location>
        <begin position="7"/>
        <end position="31"/>
    </location>
</feature>
<feature type="region of interest" description="Interaction with host CALM1" evidence="4">
    <location>
        <begin position="8"/>
        <end position="43"/>
    </location>
</feature>
<feature type="region of interest" description="Interaction with host AP3D1" evidence="6">
    <location>
        <begin position="12"/>
        <end position="19"/>
    </location>
</feature>
<feature type="region of interest" description="Interaction with membrane phosphatidylinositol 4,5-bisphosphate and RNA" evidence="6">
    <location>
        <begin position="14"/>
        <end position="33"/>
    </location>
</feature>
<feature type="region of interest" description="Interaction with membrane phosphatidylinositol 4,5-bisphosphate" evidence="6">
    <location>
        <begin position="73"/>
        <end position="77"/>
    </location>
</feature>
<feature type="region of interest" description="Disordered" evidence="16">
    <location>
        <begin position="108"/>
        <end position="127"/>
    </location>
</feature>
<feature type="region of interest" description="Interaction with human PPIA/CYPA and NUP153" evidence="6">
    <location>
        <begin position="189"/>
        <end position="227"/>
    </location>
</feature>
<feature type="region of interest" description="Dimerization/Multimerization of capsid protein p24" evidence="4">
    <location>
        <begin position="277"/>
        <end position="363"/>
    </location>
</feature>
<feature type="region of interest" description="Disordered" evidence="16">
    <location>
        <begin position="445"/>
        <end position="482"/>
    </location>
</feature>
<feature type="region of interest" description="Dimerization of protease" evidence="4">
    <location>
        <begin position="489"/>
        <end position="493"/>
    </location>
</feature>
<feature type="region of interest" description="Dimerization of protease" evidence="4">
    <location>
        <begin position="537"/>
        <end position="543"/>
    </location>
</feature>
<feature type="region of interest" description="Dimerization of protease" evidence="4">
    <location>
        <begin position="576"/>
        <end position="588"/>
    </location>
</feature>
<feature type="region of interest" description="RT 'primer grip'" evidence="1">
    <location>
        <begin position="814"/>
        <end position="822"/>
    </location>
</feature>
<feature type="short sequence motif" description="Nuclear export signal" evidence="1">
    <location>
        <begin position="16"/>
        <end position="22"/>
    </location>
</feature>
<feature type="short sequence motif" description="Nuclear localization signal" evidence="1">
    <location>
        <begin position="26"/>
        <end position="32"/>
    </location>
</feature>
<feature type="short sequence motif" description="Tryptophan repeat motif" evidence="1">
    <location>
        <begin position="985"/>
        <end position="1001"/>
    </location>
</feature>
<feature type="compositionally biased region" description="Polar residues" evidence="16">
    <location>
        <begin position="109"/>
        <end position="118"/>
    </location>
</feature>
<feature type="compositionally biased region" description="Basic and acidic residues" evidence="16">
    <location>
        <begin position="462"/>
        <end position="471"/>
    </location>
</feature>
<feature type="active site" description="For protease activity; shared with dimeric partner" evidence="15">
    <location>
        <position position="513"/>
    </location>
</feature>
<feature type="binding site" evidence="1">
    <location>
        <position position="697"/>
    </location>
    <ligand>
        <name>Mg(2+)</name>
        <dbReference type="ChEBI" id="CHEBI:18420"/>
        <label>1</label>
        <note>catalytic; for reverse transcriptase activity</note>
    </ligand>
</feature>
<feature type="binding site" evidence="1">
    <location>
        <position position="772"/>
    </location>
    <ligand>
        <name>Mg(2+)</name>
        <dbReference type="ChEBI" id="CHEBI:18420"/>
        <label>1</label>
        <note>catalytic; for reverse transcriptase activity</note>
    </ligand>
</feature>
<feature type="binding site" evidence="1">
    <location>
        <position position="773"/>
    </location>
    <ligand>
        <name>Mg(2+)</name>
        <dbReference type="ChEBI" id="CHEBI:18420"/>
        <label>1</label>
        <note>catalytic; for reverse transcriptase activity</note>
    </ligand>
</feature>
<feature type="binding site" evidence="1">
    <location>
        <position position="1030"/>
    </location>
    <ligand>
        <name>Mg(2+)</name>
        <dbReference type="ChEBI" id="CHEBI:18420"/>
        <label>2</label>
        <note>catalytic; for RNase H activity</note>
    </ligand>
</feature>
<feature type="binding site" evidence="1">
    <location>
        <position position="1065"/>
    </location>
    <ligand>
        <name>Mg(2+)</name>
        <dbReference type="ChEBI" id="CHEBI:18420"/>
        <label>2</label>
        <note>catalytic; for RNase H activity</note>
    </ligand>
</feature>
<feature type="binding site" evidence="1">
    <location>
        <position position="1085"/>
    </location>
    <ligand>
        <name>Mg(2+)</name>
        <dbReference type="ChEBI" id="CHEBI:18420"/>
        <label>2</label>
        <note>catalytic; for RNase H activity</note>
    </ligand>
</feature>
<feature type="binding site" evidence="1">
    <location>
        <position position="1136"/>
    </location>
    <ligand>
        <name>Mg(2+)</name>
        <dbReference type="ChEBI" id="CHEBI:18420"/>
        <label>2</label>
        <note>catalytic; for RNase H activity</note>
    </ligand>
</feature>
<feature type="binding site" evidence="12">
    <location>
        <position position="1159"/>
    </location>
    <ligand>
        <name>Zn(2+)</name>
        <dbReference type="ChEBI" id="CHEBI:29105"/>
    </ligand>
</feature>
<feature type="binding site" evidence="12">
    <location>
        <position position="1163"/>
    </location>
    <ligand>
        <name>Zn(2+)</name>
        <dbReference type="ChEBI" id="CHEBI:29105"/>
    </ligand>
</feature>
<feature type="binding site" evidence="12">
    <location>
        <position position="1187"/>
    </location>
    <ligand>
        <name>Zn(2+)</name>
        <dbReference type="ChEBI" id="CHEBI:29105"/>
    </ligand>
</feature>
<feature type="binding site" evidence="12">
    <location>
        <position position="1190"/>
    </location>
    <ligand>
        <name>Zn(2+)</name>
        <dbReference type="ChEBI" id="CHEBI:29105"/>
    </ligand>
</feature>
<feature type="binding site" evidence="1">
    <location>
        <position position="1211"/>
    </location>
    <ligand>
        <name>Mg(2+)</name>
        <dbReference type="ChEBI" id="CHEBI:18420"/>
        <label>3</label>
        <note>catalytic; for integrase activity</note>
    </ligand>
</feature>
<feature type="binding site" evidence="1">
    <location>
        <position position="1263"/>
    </location>
    <ligand>
        <name>Mg(2+)</name>
        <dbReference type="ChEBI" id="CHEBI:18420"/>
        <label>3</label>
        <note>catalytic; for integrase activity</note>
    </ligand>
</feature>
<feature type="binding site" evidence="4">
    <location>
        <position position="1299"/>
    </location>
    <ligand>
        <name>Mg(2+)</name>
        <dbReference type="ChEBI" id="CHEBI:18420"/>
        <label>3</label>
        <note>catalytic; for integrase activity</note>
    </ligand>
</feature>
<feature type="site" description="Cleavage; by viral protease" evidence="1">
    <location>
        <begin position="132"/>
        <end position="133"/>
    </location>
</feature>
<feature type="site" description="Cis/trans isomerization of proline peptide bond; by human PPIA/CYPA" evidence="1">
    <location>
        <begin position="221"/>
        <end position="222"/>
    </location>
</feature>
<feature type="site" description="Cleavage; by viral protease" evidence="1">
    <location>
        <begin position="363"/>
        <end position="364"/>
    </location>
</feature>
<feature type="site" description="Cleavage; by viral protease" evidence="1">
    <location>
        <begin position="378"/>
        <end position="379"/>
    </location>
</feature>
<feature type="site" description="Cleavage; by viral protease" evidence="7">
    <location>
        <begin position="433"/>
        <end position="434"/>
    </location>
</feature>
<feature type="site" description="Cleavage; by viral protease" evidence="1">
    <location>
        <begin position="441"/>
        <end position="442"/>
    </location>
</feature>
<feature type="site" description="Cleavage; by viral protease" evidence="1">
    <location>
        <begin position="488"/>
        <end position="489"/>
    </location>
</feature>
<feature type="site" description="Cleavage; by viral protease" evidence="1">
    <location>
        <begin position="587"/>
        <end position="588"/>
    </location>
</feature>
<feature type="site" description="Essential for RT p66/p51 heterodimerization" evidence="1">
    <location>
        <position position="988"/>
    </location>
</feature>
<feature type="site" description="Essential for RT p66/p51 heterodimerization" evidence="1">
    <location>
        <position position="1001"/>
    </location>
</feature>
<feature type="site" description="Cleavage; by viral protease; partial" evidence="7">
    <location>
        <begin position="1027"/>
        <end position="1028"/>
    </location>
</feature>
<feature type="site" description="Cleavage; by viral protease" evidence="1">
    <location>
        <begin position="1147"/>
        <end position="1148"/>
    </location>
</feature>
<feature type="modified residue" description="Phosphotyrosine; by host" evidence="1">
    <location>
        <position position="132"/>
    </location>
</feature>
<feature type="lipid moiety-binding region" description="N-myristoyl glycine; by host" evidence="1">
    <location>
        <position position="2"/>
    </location>
</feature>
<keyword id="KW-1073">Activation of host caspases by virus</keyword>
<keyword id="KW-0014">AIDS</keyword>
<keyword id="KW-0064">Aspartyl protease</keyword>
<keyword id="KW-0167">Capsid protein</keyword>
<keyword id="KW-0229">DNA integration</keyword>
<keyword id="KW-0233">DNA recombination</keyword>
<keyword id="KW-0238">DNA-binding</keyword>
<keyword id="KW-0239">DNA-directed DNA polymerase</keyword>
<keyword id="KW-0255">Endonuclease</keyword>
<keyword id="KW-1262">Eukaryotic host gene expression shutoff by virus</keyword>
<keyword id="KW-1193">Eukaryotic host translation shutoff by virus</keyword>
<keyword id="KW-1032">Host cell membrane</keyword>
<keyword id="KW-1035">Host cytoplasm</keyword>
<keyword id="KW-1039">Host endosome</keyword>
<keyword id="KW-1190">Host gene expression shutoff by virus</keyword>
<keyword id="KW-1043">Host membrane</keyword>
<keyword id="KW-1048">Host nucleus</keyword>
<keyword id="KW-0945">Host-virus interaction</keyword>
<keyword id="KW-0378">Hydrolase</keyword>
<keyword id="KW-0446">Lipid-binding</keyword>
<keyword id="KW-0449">Lipoprotein</keyword>
<keyword id="KW-0460">Magnesium</keyword>
<keyword id="KW-0472">Membrane</keyword>
<keyword id="KW-0479">Metal-binding</keyword>
<keyword id="KW-1119">Modulation of host cell apoptosis by virus</keyword>
<keyword id="KW-0511">Multifunctional enzyme</keyword>
<keyword id="KW-0519">Myristate</keyword>
<keyword id="KW-0540">Nuclease</keyword>
<keyword id="KW-0548">Nucleotidyltransferase</keyword>
<keyword id="KW-0597">Phosphoprotein</keyword>
<keyword id="KW-0645">Protease</keyword>
<keyword id="KW-1185">Reference proteome</keyword>
<keyword id="KW-0677">Repeat</keyword>
<keyword id="KW-0688">Ribosomal frameshifting</keyword>
<keyword id="KW-0694">RNA-binding</keyword>
<keyword id="KW-0695">RNA-directed DNA polymerase</keyword>
<keyword id="KW-0808">Transferase</keyword>
<keyword id="KW-1179">Viral genome integration</keyword>
<keyword id="KW-0543">Viral nucleoprotein</keyword>
<keyword id="KW-1163">Viral penetration into host nucleus</keyword>
<keyword id="KW-1188">Viral release from host cell</keyword>
<keyword id="KW-0946">Virion</keyword>
<keyword id="KW-0917">Virion maturation</keyword>
<keyword id="KW-1160">Virus entry into host cell</keyword>
<keyword id="KW-0862">Zinc</keyword>
<keyword id="KW-0863">Zinc-finger</keyword>
<gene>
    <name type="primary">gag-pol</name>
</gene>
<comment type="function">
    <molecule>Gag-Pol polyprotein</molecule>
    <text evidence="1">Mediates, with Gag polyprotein, the essential events in virion assembly, including binding the plasma membrane, making the protein-protein interactions necessary to create spherical particles, recruiting the viral Env proteins, and packaging the genomic RNA via direct interactions with the RNA packaging sequence (Psi). Gag-Pol polyprotein may regulate its own translation, by the binding genomic RNA in the 5'-UTR. At low concentration, the polyprotein would promote translation, whereas at high concentration, the polyprotein would encapsidate genomic RNA and then shut off translation.</text>
</comment>
<comment type="function">
    <molecule>Matrix protein p17</molecule>
    <text evidence="6">Targets the polyprotein to the plasma membrane via a multipartite membrane-binding signal, that includes its myristoylated N-terminus. Matrix protein is part of the pre-integration complex. Implicated in the release from host cell mediated by Vpu. Binds to RNA.</text>
</comment>
<comment type="function">
    <molecule>Capsid protein p24</molecule>
    <text evidence="4 6">Forms the conical core that encapsulates the genomic RNA-nucleocapsid complex in the virion. Most core are conical, with only 7% tubular. The core is constituted by capsid protein hexamer subunits. The core is disassembled soon after virion entry (By similarity). Host restriction factors such as TRIM5-alpha or TRIMCyp bind retroviral capsids and cause premature capsid disassembly, leading to blocks in reverse transcription. Capsid restriction by TRIM5 is one of the factors which restricts HIV-1 to the human species. Host PIN1 apparently facilitates the virion uncoating. On the other hand, interactions with PDZD8 or CYPA stabilize the capsid.</text>
</comment>
<comment type="function">
    <molecule>Nucleocapsid protein p7</molecule>
    <text evidence="4">Encapsulates and protects viral dimeric unspliced genomic RNA (gRNA). Binds these RNAs through its zinc fingers. Acts as a nucleic acid chaperone which is involved in rearangement of nucleic acid secondary structure during gRNA retrotranscription. Also facilitates template switch leading to recombination. As part of the polyprotein, participates in gRNA dimerization, packaging, tRNA incorporation and virion assembly.</text>
</comment>
<comment type="function">
    <molecule>Protease</molecule>
    <text evidence="4 9">Aspartyl protease that mediates proteolytic cleavages of Gag and Gag-Pol polyproteins during or shortly after the release of the virion from the plasma membrane. Cleavages take place as an ordered, step-wise cascade to yield mature proteins. This process is called maturation. Displays maximal activity during the budding process just prior to particle release from the cell. Also cleaves Nef and Vif, probably concomitantly with viral structural proteins on maturation of virus particles. Hydrolyzes host EIF4GI and PABP1 in order to shut off the capped cellular mRNA translation. The resulting inhibition of cellular protein synthesis serves to ensure maximal viral gene expression and to evade host immune response. Also mediates cleavage of host YTHDF3. Mediates cleavage of host CARD8, thereby activating the CARD8 inflammasome, leading to the clearance of latent HIV-1 in patient CD4(+) T-cells after viral reactivation; in contrast, HIV-1 can evade CARD8-sensing when its protease remains inactive in infected cells prior to viral budding (By similarity).</text>
</comment>
<comment type="function">
    <molecule>Reverse transcriptase/ribonuclease H</molecule>
    <text evidence="4">Multifunctional enzyme that converts the viral RNA genome into dsDNA in the cytoplasm, shortly after virus entry into the cell. This enzyme displays a DNA polymerase activity that can copy either DNA or RNA templates, and a ribonuclease H (RNase H) activity that cleaves the RNA strand of RNA-DNA heteroduplexes in a partially processive 3' to 5' endonucleasic mode. Conversion of viral genomic RNA into dsDNA requires many steps. A tRNA(3)-Lys binds to the primer-binding site (PBS) situated at the 5'-end of the viral RNA. RT uses the 3' end of the tRNA primer to perform a short round of RNA-dependent minus-strand DNA synthesis. The reading proceeds through the U5 region and ends after the repeated (R) region which is present at both ends of viral RNA. The portion of the RNA-DNA heteroduplex is digested by the RNase H, resulting in a ssDNA product attached to the tRNA primer. This ssDNA/tRNA hybridizes with the identical R region situated at the 3' end of viral RNA. This template exchange, known as minus-strand DNA strong stop transfer, can be either intra- or intermolecular. RT uses the 3' end of this newly synthesized short ssDNA to perform the RNA-dependent minus-strand DNA synthesis of the whole template. RNase H digests the RNA template except for two polypurine tracts (PPTs) situated at the 5'-end and near the center of the genome. It is not clear if both polymerase and RNase H activities are simultaneous. RNase H probably can proceed both in a polymerase-dependent (RNA cut into small fragments by the same RT performing DNA synthesis) and a polymerase-independent mode (cleavage of remaining RNA fragments by free RTs). Secondly, RT performs DNA-directed plus-strand DNA synthesis using the PPTs that have not been removed by RNase H as primers. PPTs and tRNA primers are then removed by RNase H. The 3' and 5' ssDNA PBS regions hybridize to form a circular dsDNA intermediate. Strand displacement synthesis by RT to the PBS and PPT ends produces a blunt ended, linear dsDNA copy of the viral genome that includes long terminal repeats (LTRs) at both ends.</text>
</comment>
<comment type="function">
    <molecule>Integrase</molecule>
    <text evidence="4">Catalyzes viral DNA integration into the host chromosome, by performing a series of DNA cutting and joining reactions. This enzyme activity takes place after virion entry into a cell and reverse transcription of the RNA genome in dsDNA. The first step in the integration process is 3' processing. This step requires a complex comprising the viral genome, matrix protein, Vpr and integrase. This complex is called the pre-integration complex (PIC). The integrase protein removes 2 nucleotides from each 3' end of the viral DNA, leaving recessed CA OH's at the 3' ends. In the second step, the PIC enters cell nucleus. This process is mediated through integrase and Vpr proteins, and allows the virus to infect a non dividing cell. This ability to enter the nucleus is specific of lentiviruses, other retroviruses cannot and rely on cell division to access cell chromosomes. In the third step, termed strand transfer, the integrase protein joins the previously processed 3' ends to the 5' ends of strands of target cellular DNA at the site of integration. The 5'-ends are produced by integrase-catalyzed staggered cuts, 5 bp apart. A Y-shaped, gapped, recombination intermediate results, with the 5'-ends of the viral DNA strands and the 3' ends of target DNA strands remaining unjoined, flanking a gap of 5 bp. The last step is viral DNA integration into host chromosome. This involves host DNA repair synthesis in which the 5 bp gaps between the unjoined strands are filled in and then ligated. Since this process occurs at both cuts flanking the HIV genome, a 5 bp duplication of host DNA is produced at the ends of HIV-1 integration. Alternatively, Integrase may catalyze the excision of viral DNA just after strand transfer, this is termed disintegration.</text>
</comment>
<comment type="catalytic activity">
    <reaction evidence="9">
        <text>Specific for a P1 residue that is hydrophobic, and P1' variable, but often Pro.</text>
        <dbReference type="EC" id="3.4.23.16"/>
    </reaction>
</comment>
<comment type="catalytic activity">
    <reaction evidence="1">
        <text>Endohydrolysis of RNA in RNA/DNA hybrids. Three different cleavage modes: 1. sequence-specific internal cleavage of RNA. Human immunodeficiency virus type 1 and Moloney murine leukemia virus enzymes prefer to cleave the RNA strand one nucleotide away from the RNA-DNA junction. 2. RNA 5'-end directed cleavage 13-19 nucleotides from the RNA end. 3. DNA 3'-end directed cleavage 15-20 nucleotides away from the primer terminus.</text>
        <dbReference type="EC" id="3.1.26.13"/>
    </reaction>
</comment>
<comment type="catalytic activity">
    <reaction evidence="1">
        <text>3'-end directed exonucleolytic cleavage of viral RNA-DNA hybrid.</text>
        <dbReference type="EC" id="3.1.13.2"/>
    </reaction>
</comment>
<comment type="catalytic activity">
    <reaction evidence="10">
        <text>DNA(n) + a 2'-deoxyribonucleoside 5'-triphosphate = DNA(n+1) + diphosphate</text>
        <dbReference type="Rhea" id="RHEA:22508"/>
        <dbReference type="Rhea" id="RHEA-COMP:17339"/>
        <dbReference type="Rhea" id="RHEA-COMP:17340"/>
        <dbReference type="ChEBI" id="CHEBI:33019"/>
        <dbReference type="ChEBI" id="CHEBI:61560"/>
        <dbReference type="ChEBI" id="CHEBI:173112"/>
        <dbReference type="EC" id="2.7.7.49"/>
    </reaction>
</comment>
<comment type="catalytic activity">
    <reaction evidence="10">
        <text>DNA(n) + a 2'-deoxyribonucleoside 5'-triphosphate = DNA(n+1) + diphosphate</text>
        <dbReference type="Rhea" id="RHEA:22508"/>
        <dbReference type="Rhea" id="RHEA-COMP:17339"/>
        <dbReference type="Rhea" id="RHEA-COMP:17340"/>
        <dbReference type="ChEBI" id="CHEBI:33019"/>
        <dbReference type="ChEBI" id="CHEBI:61560"/>
        <dbReference type="ChEBI" id="CHEBI:173112"/>
        <dbReference type="EC" id="2.7.7.7"/>
    </reaction>
</comment>
<comment type="cofactor">
    <cofactor evidence="1">
        <name>Mg(2+)</name>
        <dbReference type="ChEBI" id="CHEBI:18420"/>
    </cofactor>
    <text evidence="1">Binds 2 magnesium ions for reverse transcriptase polymerase activity.</text>
</comment>
<comment type="cofactor">
    <cofactor evidence="1">
        <name>Mg(2+)</name>
        <dbReference type="ChEBI" id="CHEBI:18420"/>
    </cofactor>
    <text evidence="1">Binds 2 magnesium ions for ribonuclease H (RNase H) activity. Substrate-binding is a precondition for magnesium binding.</text>
</comment>
<comment type="cofactor">
    <cofactor evidence="1">
        <name>Mg(2+)</name>
        <dbReference type="ChEBI" id="CHEBI:18420"/>
    </cofactor>
    <text evidence="1">Magnesium ions are required for integrase activity. Binds at least 1, maybe 2 magnesium ions.</text>
</comment>
<comment type="activity regulation">
    <text evidence="1">Protease: The viral protease is inhibited by many synthetic protease inhibitors (PIs), such as amprenavir, atazanavir, indinavir, loprinavir, nelfinavir, ritonavir and saquinavir. Use of protease inhibitors in tritherapy regimens permit more ambitious therapeutic strategies. Reverse transcriptase/ribonuclease H: RT can be inhibited either by nucleoside RT inhibitors (NRTIs) or by non nucleoside RT inhibitors (NNRTIs). NRTIs act as chain terminators, whereas NNRTIs inhibit DNA polymerization by binding a small hydrophobic pocket near the RT active site and inducing an allosteric change in this region. Classical NRTIs are abacavir, adefovir (PMEA), didanosine (ddI), lamivudine (3TC), stavudine (d4T), tenofovir (PMPA), zalcitabine (ddC), and zidovudine (AZT). Classical NNRTIs are atevirdine (BHAP U-87201E), delavirdine, efavirenz (DMP-266), emivirine (I-EBU), and nevirapine (BI-RG-587). The tritherapies used as a basic effective treatment of AIDS associate two NRTIs and one NNRTI.</text>
</comment>
<comment type="subunit">
    <molecule>Matrix protein p17</molecule>
    <text evidence="4 6">Homotrimer; further assembles as hexamers of trimers (By similarity). Interacts with gp41 (via C-terminus) (By similarity). Interacts with host CALM1; this interaction induces a conformational change in the Matrix protein, triggering exposure of the myristate group (By similarity). Interacts with host AP3D1; this interaction allows the polyprotein trafficking to multivesicular bodies during virus assembly (By similarity). Part of the pre-integration complex (PIC) which is composed of viral genome, matrix protein, Vpr and integrase (By similarity).</text>
</comment>
<comment type="subunit">
    <molecule>Capsid protein p24</molecule>
    <text evidence="4 6">Homodimer; the homodimer further multimerizes as homohexamers or homopentamers. Interacts with human PPIA/CYPA (By similarity); This interaction stabilizes the capsid. Interacts with human NUP153 (By similarity). Interacts with host PDZD8; this interaction stabilizes the capsid (By similarity). Interacts with monkey TRIM5; this interaction destabilizes the capsid (By similarity).</text>
</comment>
<comment type="subunit">
    <molecule>Protease</molecule>
    <text evidence="4 6">Homodimer, whose active site consists of two apposed aspartic acid residues.</text>
</comment>
<comment type="subunit">
    <molecule>Reverse transcriptase/ribonuclease H</molecule>
    <text evidence="3">Heterodimer of p66 RT and p51 RT (RT p66/p51) (By similarity). Heterodimerization of RT is essential for DNA polymerase activity (By similarity). The overall folding of the subdomains is similar in p66 RT and p51 RT but the spatial arrangements of the subdomains are dramatically different (By similarity).</text>
</comment>
<comment type="subunit">
    <molecule>Integrase</molecule>
    <text evidence="4 6">Homodimer; possibly can form homotetramer. Part of the pre-integration complex (PIC) which is composed of viral genome, matrix protein, Vpr and integrase. Interacts with human SMARCB1/INI1 and human PSIP1/LEDGF isoform 1. Interacts with human KPNA3; this interaction might play a role in nuclear import of the pre-integration complex (By similarity). Interacts with human NUP153; this interaction might play a role in nuclear import of the pre-integration complex (By similarity).</text>
</comment>
<comment type="subcellular location">
    <molecule>Gag-Pol polyprotein</molecule>
    <subcellularLocation>
        <location>Host cell membrane</location>
        <topology>Lipid-anchor</topology>
    </subcellularLocation>
    <subcellularLocation>
        <location>Host endosome</location>
        <location>Host multivesicular body</location>
    </subcellularLocation>
    <text evidence="6">These locations are linked to virus assembly sites. The main location is the cell membrane, but under some circumstances, late endosomal compartments can serve as productive sites for virion assembly.</text>
</comment>
<comment type="subcellular location">
    <molecule>Matrix protein p17</molecule>
    <subcellularLocation>
        <location>Virion membrane</location>
        <topology evidence="17">Lipid-anchor</topology>
    </subcellularLocation>
    <subcellularLocation>
        <location evidence="1">Host nucleus</location>
    </subcellularLocation>
    <subcellularLocation>
        <location evidence="1">Host cytoplasm</location>
    </subcellularLocation>
</comment>
<comment type="subcellular location">
    <molecule>Capsid protein p24</molecule>
    <subcellularLocation>
        <location evidence="17">Virion</location>
    </subcellularLocation>
</comment>
<comment type="subcellular location">
    <molecule>Nucleocapsid protein p7</molecule>
    <subcellularLocation>
        <location evidence="17">Virion</location>
    </subcellularLocation>
</comment>
<comment type="subcellular location">
    <molecule>Reverse transcriptase/ribonuclease H</molecule>
    <subcellularLocation>
        <location evidence="17">Virion</location>
    </subcellularLocation>
</comment>
<comment type="subcellular location">
    <molecule>Integrase</molecule>
    <subcellularLocation>
        <location evidence="17">Virion</location>
    </subcellularLocation>
    <subcellularLocation>
        <location evidence="17">Host nucleus</location>
    </subcellularLocation>
    <subcellularLocation>
        <location evidence="17">Host cytoplasm</location>
    </subcellularLocation>
    <text evidence="17">Nuclear at initial phase, cytoplasmic at assembly.</text>
</comment>
<comment type="alternative products">
    <event type="ribosomal frameshifting"/>
    <isoform>
        <id>O93215-1</id>
        <name>Gag-Pol polyprotein</name>
        <sequence type="displayed"/>
    </isoform>
    <isoform>
        <id>O93182-1</id>
        <name>Gag polyprotein</name>
        <sequence type="external"/>
    </isoform>
    <text>Translation results in the formation of the Gag polyprotein most of the time. Ribosomal frameshifting at the gag-pol genes boundary occurs at low frequency and produces the Gag-Pol polyprotein. This strategy of translation probably allows the virus to modulate the quantity of each viral protein. Maintenance of a correct Gag to Gag-Pol ratio is essential for RNA dimerization and viral infectivity.</text>
</comment>
<comment type="domain">
    <molecule>Reverse transcriptase/ribonuclease H</molecule>
    <text evidence="1">RT is structured in five subdomains: finger, palm, thumb, connection and RNase H. Within the palm subdomain, the 'primer grip' region is thought to be involved in the positioning of the primer terminus for accommodating the incoming nucleotide. The RNase H domain stabilizes the association of RT with primer-template.</text>
</comment>
<comment type="domain">
    <molecule>Reverse transcriptase/ribonuclease H</molecule>
    <text evidence="1">The tryptophan repeat motif is involved in RT p66/p51 dimerization (By similarity).</text>
</comment>
<comment type="domain">
    <molecule>Integrase</molecule>
    <text evidence="1">The core domain contains the D-x(n)-D-x(35)-E motif, named for the phylogenetically conserved glutamic acid and aspartic acid residues and the invariant 35 amino acid spacing between the second and third acidic residues. Each acidic residue of the D,D(35)E motif is independently essential for the 3'-processing and strand transfer activities of purified integrase protein.</text>
</comment>
<comment type="PTM">
    <molecule>Gag-Pol polyprotein</molecule>
    <text evidence="4 10">Specific enzymatic cleavages by the viral protease yield mature proteins. The protease is released by autocatalytic cleavage. The polyprotein is cleaved during and after budding, this process is termed maturation. Proteolytic cleavage of p66 RT removes the RNase H domain to yield the p51 RT subunit. Nucleocapsid protein p7 might be further cleaved after virus entry.</text>
</comment>
<comment type="PTM">
    <molecule>Matrix protein p17</molecule>
    <text evidence="4">Tyrosine phosphorylated presumably in the virion by a host kinase. Phosphorylation is apparently not a major regulator of membrane association.</text>
</comment>
<comment type="PTM">
    <molecule>Capsid protein p24</molecule>
    <text evidence="5">Phosphorylated possibly by host MAPK1; this phosphorylation is necessary for Pin1-mediated virion uncoating.</text>
</comment>
<comment type="PTM">
    <molecule>Nucleocapsid protein p7</molecule>
    <text evidence="2">Methylated by host PRMT6, impairing its function by reducing RNA annealing and the initiation of reverse transcription.</text>
</comment>
<comment type="miscellaneous">
    <molecule>Reverse transcriptase/ribonuclease H</molecule>
    <text evidence="1">Error-prone enzyme that lacks a proof-reading function. High mutations rate is a direct consequence of this characteristic. RT also displays frequent template switching leading to high recombination rate. Recombination mostly occurs between homologous regions of the two copackaged RNA genomes. If these two RNA molecules derive from different viral strains, reverse transcription will give rise to highly recombinated proviral DNAs.</text>
</comment>
<comment type="miscellaneous">
    <text>HIV-1 lineages are divided in three main groups, M (for Major), O (for Outlier), and N (for New, or Non-M, Non-O). The vast majority of strains found worldwide belong to the group M. Group O seems to be endemic to and largely confined to Cameroon and neighboring countries in West Central Africa, where these viruses represent a small minority of HIV-1 strains. The group N is represented by a limited number of isolates from Cameroonian persons. The group M is further subdivided in 9 clades or subtypes (A to D, F to H, J and K).</text>
</comment>
<comment type="miscellaneous">
    <text>Resistance to inhibitors associated with mutations are observed both in viral protease and in reverse transcriptase. Most of the time, single mutations confer only a modest reduction in drug susceptibility. Combination of several mutations is usually required to develop a high-level drug resistance. These mutations are predominantly found in clade B viruses and not in other genotypes. They are listed in the clade B representative isolate HXB2 (AC P04585).</text>
</comment>
<comment type="miscellaneous">
    <molecule>Isoform Gag-Pol polyprotein</molecule>
    <text>Produced by -1 ribosomal frameshifting.</text>
</comment>
<comment type="online information" name="HIV drug resistance mutations">
    <link uri="https://www.iasusa.org/hiv-drug-resistance/hiv-drug-resistance-mutations/"/>
</comment>
<comment type="online information" name="hivdb">
    <link uri="https://hivdb.stanford.edu"/>
    <text>HIV drug resistance database</text>
</comment>
<proteinExistence type="inferred from homology"/>
<sequence>MGARASVLSGGKLDAWEKIRLRPGGKKKYRLKHLVWASRELERFALNPGLLETPEGCLQIIEQIQPAIKTGTEELKSLFNLVAVLYCVHRKIDVKDTKEALDKIEEIQNKSQQKTQQAAADKEKDNKVSQNYPIVQNAQGQMVHQAISPRTLNAWVKVVEEKAFSPEVIPMFSALSEGATPQDLNAMLNTVGGHQAAMQMLKDTINEEAAEWDRVHPVHAGPIPPGQMREPRGSDIAGTTSTLQEQIAWMTGNPAIPVGDIYKRWIILGLNKIVRMYSPVSILDIKQGPKEPFRDYVDRFFKTLRAEQATQDVKNWMTETLLVQNANPDCKTILRALGQGASIEEMMTACQGVGGPSHKARVLAEAMSQVTNTNTAIMMQKGNFKGQRKFVKCFNCGKEGHIARNCRAPRKKGCWKCGREGHQMKDCTERQAKFFRENLAFQQREARKFSPEQARTNSPTSRELRVRRGDDPLSEAGAAEGQGTSLSFPQITLWQRPLVTVKIEGQLREALLDTGADDTVLEEINLPGKWKPKMIGGIGGFIKVRQYEQVAIEICGKKAIGTVLVGPTPVNIIGRNILTQIGCTLNFPISPIETVPVKLKPGMDGPKVKQWPLTEEKIKALTEICTEMEKEGKISRIGPENPYSTPIFAIKKKDSTKWRKLVDFRELNKRTQDFWEVQLGIPHPAGLKKKKSVSVLDVGDAYFSVPLDKEFRKYTAFTIPSINNETPGIRYQYNVLPQGWKGSPAIFQSSMTKILAPFREQNPEMVIYQYMDDLYVGSDLEIGQHRAKIEELRAHLLKWGFTTPDKKHQKEPPFLWMGYELHPDKWTVQTVKLPEKDSWTVNDIQKLVGKLNWASQIYPNIKVKQLCKLLRGAKALTDIIPLTKEAELELAENREILREPIHGVYYDPSKDLIAEIRKQGQGQWTYQIYQEPFKNLKTGKYAKMRTAHTNDIKQLTEAVQKISTESIVIWGKIPKFRLPIQKETWETWWTEYWQATWIPEWEFVNTPHLVKLWYQLETEPIAGAETYYIDGAANRETKLGKAGYVTDRGKQKVVSLTETTNQKTELQAIYLALQDSGLEVNIVTDSQYALGIIQAQPDKSESELVNQIIEELIKKEKVYLSWVPAHKGIGGNEQVDKLVSSGVRKVLFLDGIDKAQEEHERYHNNWRAVASDFNLPPIVAKEIVASCDKCQLKGEAMHGQVDCSPGIWQLDCTHLEGQVILVAVHVASGYIEAEVIPAETGKETAYFLLKLASRWPVKVIHTDNGSNFTSAAVKAACWWADIQQEFGIPYNPQSQGVVESMNKELKKIIGQVRDQAEHLKTAVQMAVFIHNFKRKGGIGGYSAGERIIDIIATDIQTKELQKQISNIQKFRVYYRDSRDPIWKGPAKLLWKGEGAVVIQDNSEIKVVPRREAKIIRDYGKQMAGDDCVASRQDED</sequence>
<accession>O93215</accession>